<dbReference type="EMBL" id="CR956379">
    <property type="protein sequence ID" value="CAN13162.1"/>
    <property type="molecule type" value="Genomic_DNA"/>
</dbReference>
<dbReference type="RefSeq" id="NP_001116664.1">
    <property type="nucleotide sequence ID" value="NM_001123192.1"/>
</dbReference>
<dbReference type="SMR" id="A5GFQ0"/>
<dbReference type="FunCoup" id="A5GFQ0">
    <property type="interactions" value="1517"/>
</dbReference>
<dbReference type="STRING" id="9823.ENSSSCP00000071534"/>
<dbReference type="PaxDb" id="9823-ENSSSCP00000019911"/>
<dbReference type="Ensembl" id="ENSSSCT00000027250.4">
    <property type="protein sequence ID" value="ENSSSCP00000019911.1"/>
    <property type="gene ID" value="ENSSSCG00000026472.4"/>
</dbReference>
<dbReference type="Ensembl" id="ENSSSCT00015056594.1">
    <property type="protein sequence ID" value="ENSSSCP00015022674.1"/>
    <property type="gene ID" value="ENSSSCG00015042432.1"/>
</dbReference>
<dbReference type="Ensembl" id="ENSSSCT00025061389.1">
    <property type="protein sequence ID" value="ENSSSCP00025026069.1"/>
    <property type="gene ID" value="ENSSSCG00025045173.1"/>
</dbReference>
<dbReference type="Ensembl" id="ENSSSCT00030086949.1">
    <property type="protein sequence ID" value="ENSSSCP00030040121.1"/>
    <property type="gene ID" value="ENSSSCG00030062176.1"/>
</dbReference>
<dbReference type="Ensembl" id="ENSSSCT00035046826.1">
    <property type="protein sequence ID" value="ENSSSCP00035018716.1"/>
    <property type="gene ID" value="ENSSSCG00035035332.1"/>
</dbReference>
<dbReference type="Ensembl" id="ENSSSCT00040054610.1">
    <property type="protein sequence ID" value="ENSSSCP00040022700.1"/>
    <property type="gene ID" value="ENSSSCG00040040844.1"/>
</dbReference>
<dbReference type="Ensembl" id="ENSSSCT00040054728.1">
    <property type="protein sequence ID" value="ENSSSCP00040022750.1"/>
    <property type="gene ID" value="ENSSSCG00040040844.1"/>
</dbReference>
<dbReference type="Ensembl" id="ENSSSCT00045011701.1">
    <property type="protein sequence ID" value="ENSSSCP00045007942.1"/>
    <property type="gene ID" value="ENSSSCG00045007055.1"/>
</dbReference>
<dbReference type="Ensembl" id="ENSSSCT00050005933.1">
    <property type="protein sequence ID" value="ENSSSCP00050002584.1"/>
    <property type="gene ID" value="ENSSSCG00050004301.1"/>
</dbReference>
<dbReference type="Ensembl" id="ENSSSCT00055032860.1">
    <property type="protein sequence ID" value="ENSSSCP00055026179.1"/>
    <property type="gene ID" value="ENSSSCG00055016642.1"/>
</dbReference>
<dbReference type="Ensembl" id="ENSSSCT00060084924.1">
    <property type="protein sequence ID" value="ENSSSCP00060036748.1"/>
    <property type="gene ID" value="ENSSSCG00060062264.1"/>
</dbReference>
<dbReference type="Ensembl" id="ENSSSCT00065109990.1">
    <property type="protein sequence ID" value="ENSSSCP00065049496.1"/>
    <property type="gene ID" value="ENSSSCG00065079151.1"/>
</dbReference>
<dbReference type="GeneID" id="100141406"/>
<dbReference type="KEGG" id="ssc:100141406"/>
<dbReference type="CTD" id="285855"/>
<dbReference type="VGNC" id="VGNC:98297">
    <property type="gene designation" value="RPL7L1"/>
</dbReference>
<dbReference type="eggNOG" id="KOG3184">
    <property type="taxonomic scope" value="Eukaryota"/>
</dbReference>
<dbReference type="GeneTree" id="ENSGT00950000182878"/>
<dbReference type="HOGENOM" id="CLU_055156_5_0_1"/>
<dbReference type="InParanoid" id="A5GFQ0"/>
<dbReference type="OMA" id="IEEHMGK"/>
<dbReference type="OrthoDB" id="28644at2759"/>
<dbReference type="TreeFam" id="TF300740"/>
<dbReference type="Proteomes" id="UP000008227">
    <property type="component" value="Chromosome 7"/>
</dbReference>
<dbReference type="Proteomes" id="UP000314985">
    <property type="component" value="Unplaced"/>
</dbReference>
<dbReference type="Proteomes" id="UP000694570">
    <property type="component" value="Unplaced"/>
</dbReference>
<dbReference type="Proteomes" id="UP000694571">
    <property type="component" value="Unplaced"/>
</dbReference>
<dbReference type="Proteomes" id="UP000694720">
    <property type="component" value="Unplaced"/>
</dbReference>
<dbReference type="Proteomes" id="UP000694722">
    <property type="component" value="Unplaced"/>
</dbReference>
<dbReference type="Proteomes" id="UP000694723">
    <property type="component" value="Unplaced"/>
</dbReference>
<dbReference type="Proteomes" id="UP000694724">
    <property type="component" value="Unplaced"/>
</dbReference>
<dbReference type="Proteomes" id="UP000694725">
    <property type="component" value="Unplaced"/>
</dbReference>
<dbReference type="Proteomes" id="UP000694726">
    <property type="component" value="Unplaced"/>
</dbReference>
<dbReference type="Proteomes" id="UP000694727">
    <property type="component" value="Unplaced"/>
</dbReference>
<dbReference type="Proteomes" id="UP000694728">
    <property type="component" value="Unplaced"/>
</dbReference>
<dbReference type="Bgee" id="ENSSSCG00000026472">
    <property type="expression patterns" value="Expressed in hindlimb bud and 45 other cell types or tissues"/>
</dbReference>
<dbReference type="ExpressionAtlas" id="A5GFQ0">
    <property type="expression patterns" value="baseline and differential"/>
</dbReference>
<dbReference type="GO" id="GO:0022625">
    <property type="term" value="C:cytosolic large ribosomal subunit"/>
    <property type="evidence" value="ECO:0000318"/>
    <property type="project" value="GO_Central"/>
</dbReference>
<dbReference type="GO" id="GO:0005730">
    <property type="term" value="C:nucleolus"/>
    <property type="evidence" value="ECO:0007669"/>
    <property type="project" value="Ensembl"/>
</dbReference>
<dbReference type="GO" id="GO:0003723">
    <property type="term" value="F:RNA binding"/>
    <property type="evidence" value="ECO:0000318"/>
    <property type="project" value="GO_Central"/>
</dbReference>
<dbReference type="GO" id="GO:0003735">
    <property type="term" value="F:structural constituent of ribosome"/>
    <property type="evidence" value="ECO:0000318"/>
    <property type="project" value="GO_Central"/>
</dbReference>
<dbReference type="GO" id="GO:0001825">
    <property type="term" value="P:blastocyst formation"/>
    <property type="evidence" value="ECO:0007669"/>
    <property type="project" value="Ensembl"/>
</dbReference>
<dbReference type="GO" id="GO:0000463">
    <property type="term" value="P:maturation of LSU-rRNA from tricistronic rRNA transcript (SSU-rRNA, 5.8S rRNA, LSU-rRNA)"/>
    <property type="evidence" value="ECO:0000318"/>
    <property type="project" value="GO_Central"/>
</dbReference>
<dbReference type="CDD" id="cd01657">
    <property type="entry name" value="Ribosomal_L7_archeal_euk"/>
    <property type="match status" value="1"/>
</dbReference>
<dbReference type="FunFam" id="1.10.15.30:FF:000001">
    <property type="entry name" value="60S ribosomal protein L7"/>
    <property type="match status" value="1"/>
</dbReference>
<dbReference type="FunFam" id="3.30.1390.20:FF:000004">
    <property type="entry name" value="60S ribosomal protein L7"/>
    <property type="match status" value="1"/>
</dbReference>
<dbReference type="Gene3D" id="1.10.15.30">
    <property type="match status" value="1"/>
</dbReference>
<dbReference type="Gene3D" id="3.30.1390.20">
    <property type="entry name" value="Ribosomal protein L30, ferredoxin-like fold domain"/>
    <property type="match status" value="1"/>
</dbReference>
<dbReference type="InterPro" id="IPR036919">
    <property type="entry name" value="Ribo_uL30_ferredoxin-like_sf"/>
</dbReference>
<dbReference type="InterPro" id="IPR039699">
    <property type="entry name" value="Ribosomal_uL30"/>
</dbReference>
<dbReference type="InterPro" id="IPR005998">
    <property type="entry name" value="Ribosomal_uL30_euk"/>
</dbReference>
<dbReference type="InterPro" id="IPR035808">
    <property type="entry name" value="Ribosomal_uL30_euk_arc"/>
</dbReference>
<dbReference type="InterPro" id="IPR016082">
    <property type="entry name" value="Ribosomal_uL30_ferredoxin-like"/>
</dbReference>
<dbReference type="InterPro" id="IPR012988">
    <property type="entry name" value="Ribosomal_uL30_N_euk"/>
</dbReference>
<dbReference type="NCBIfam" id="TIGR01310">
    <property type="entry name" value="uL30_euk"/>
    <property type="match status" value="1"/>
</dbReference>
<dbReference type="PANTHER" id="PTHR11524">
    <property type="entry name" value="60S RIBOSOMAL PROTEIN L7"/>
    <property type="match status" value="1"/>
</dbReference>
<dbReference type="PANTHER" id="PTHR11524:SF13">
    <property type="entry name" value="RIBOSOMAL PROTEIN UL30-LIKE"/>
    <property type="match status" value="1"/>
</dbReference>
<dbReference type="Pfam" id="PF00327">
    <property type="entry name" value="Ribosomal_L30"/>
    <property type="match status" value="1"/>
</dbReference>
<dbReference type="Pfam" id="PF08079">
    <property type="entry name" value="Ribosomal_L30_N"/>
    <property type="match status" value="1"/>
</dbReference>
<dbReference type="SUPFAM" id="SSF55129">
    <property type="entry name" value="Ribosomal protein L30p/L7e"/>
    <property type="match status" value="1"/>
</dbReference>
<gene>
    <name type="primary">RPL7L1</name>
</gene>
<comment type="similarity">
    <text evidence="1">Belongs to the universal ribosomal protein uL30 family.</text>
</comment>
<feature type="chain" id="PRO_0000319319" description="Large ribosomal subunit protein uL30">
    <location>
        <begin position="1"/>
        <end position="247"/>
    </location>
</feature>
<protein>
    <recommendedName>
        <fullName evidence="1">Large ribosomal subunit protein uL30</fullName>
    </recommendedName>
    <alternativeName>
        <fullName>60S ribosomal protein L7-like 1</fullName>
    </alternativeName>
</protein>
<evidence type="ECO:0000305" key="1"/>
<reference key="1">
    <citation type="submission" date="2007-05" db="EMBL/GenBank/DDBJ databases">
        <authorList>
            <consortium name="Porcine genome sequencing project"/>
        </authorList>
    </citation>
    <scope>NUCLEOTIDE SEQUENCE [LARGE SCALE GENOMIC DNA]</scope>
</reference>
<accession>A5GFQ0</accession>
<sequence>MAEEEQRKKIPLVPENLLKKRKAYQALKATQAKQALLQKKEQRKGKELKFKRLEWFLHDSWRQLRDRVRLRRLEVKPHGLEVPDKHSLAFVVRIERISGVSSVVQRTIARLRLKKIFSGVFMQVTPQTIKTLRIVEPYVTWGFPNLKSVRELILKRGQAKVKNKIIPLTDNTVIEEHLGKFGVICLEDLIHEIAFPGKNFQAISGFLRPFQLSVARHATKNRVGFLKEVGSPGYRGERINQLIRQLN</sequence>
<organism>
    <name type="scientific">Sus scrofa</name>
    <name type="common">Pig</name>
    <dbReference type="NCBI Taxonomy" id="9823"/>
    <lineage>
        <taxon>Eukaryota</taxon>
        <taxon>Metazoa</taxon>
        <taxon>Chordata</taxon>
        <taxon>Craniata</taxon>
        <taxon>Vertebrata</taxon>
        <taxon>Euteleostomi</taxon>
        <taxon>Mammalia</taxon>
        <taxon>Eutheria</taxon>
        <taxon>Laurasiatheria</taxon>
        <taxon>Artiodactyla</taxon>
        <taxon>Suina</taxon>
        <taxon>Suidae</taxon>
        <taxon>Sus</taxon>
    </lineage>
</organism>
<proteinExistence type="inferred from homology"/>
<name>RL7L_PIG</name>
<keyword id="KW-1185">Reference proteome</keyword>
<keyword id="KW-0687">Ribonucleoprotein</keyword>
<keyword id="KW-0689">Ribosomal protein</keyword>